<sequence>MALAMMIRNAASKRGMTPISGHFGGLRSMSSWWKSVEPAPKDPILGVTEAFLADPSPEKVNVGVGAYRDDNGKPVVLECVREAEKRLAGSTFMEYLPMGGSAKMVDLTLKLAYGDNSEFIKDKRIAAVQTLSGTGACRLFADFQKRFSPGSQIYIPVPTWSNHHNIWKDAQVPQKTYHYYHPETKGLDFSALMDDVKNAPEGSFFLLHACAHNPTGVDPTEEQWREISQLFKAKKHFAFFDMAYQGFASGDPARDAKSIRIFLEDGHHIGISQSYAKNMGLYGQRVGCLSVLCEDPKQAVAVKSQLQQLARPMYSNPPLHGAQLVSTILEDPELKSLWLKEVKVMADRIIGMRTTLRESLEKLGSPLSWEHVTKQIGMFCYSGLTPEQVDRLTSEYHIYMTRNGRISMAGVTTGNVGYLANAIHEVTKSS</sequence>
<accession>P46643</accession>
<evidence type="ECO:0000250" key="1"/>
<evidence type="ECO:0000250" key="2">
    <source>
        <dbReference type="UniProtKB" id="P23542"/>
    </source>
</evidence>
<evidence type="ECO:0000255" key="3"/>
<evidence type="ECO:0000269" key="4">
    <source>
    </source>
</evidence>
<evidence type="ECO:0000269" key="5">
    <source>
    </source>
</evidence>
<evidence type="ECO:0000269" key="6">
    <source>
    </source>
</evidence>
<evidence type="ECO:0000269" key="7">
    <source>
    </source>
</evidence>
<evidence type="ECO:0000269" key="8">
    <source>
    </source>
</evidence>
<evidence type="ECO:0000305" key="9"/>
<name>AAT1_ARATH</name>
<gene>
    <name type="primary">ASP1</name>
    <name type="ordered locus">At2g30970</name>
    <name type="ORF">F7F1.18</name>
</gene>
<organism>
    <name type="scientific">Arabidopsis thaliana</name>
    <name type="common">Mouse-ear cress</name>
    <dbReference type="NCBI Taxonomy" id="3702"/>
    <lineage>
        <taxon>Eukaryota</taxon>
        <taxon>Viridiplantae</taxon>
        <taxon>Streptophyta</taxon>
        <taxon>Embryophyta</taxon>
        <taxon>Tracheophyta</taxon>
        <taxon>Spermatophyta</taxon>
        <taxon>Magnoliopsida</taxon>
        <taxon>eudicotyledons</taxon>
        <taxon>Gunneridae</taxon>
        <taxon>Pentapetalae</taxon>
        <taxon>rosids</taxon>
        <taxon>malvids</taxon>
        <taxon>Brassicales</taxon>
        <taxon>Brassicaceae</taxon>
        <taxon>Camelineae</taxon>
        <taxon>Arabidopsis</taxon>
    </lineage>
</organism>
<feature type="transit peptide" description="Mitochondrion" evidence="3">
    <location>
        <begin position="1"/>
        <end position="28"/>
    </location>
</feature>
<feature type="chain" id="PRO_0000001209" description="Aspartate aminotransferase, mitochondrial">
    <location>
        <begin position="29"/>
        <end position="430"/>
    </location>
</feature>
<feature type="binding site" evidence="2">
    <location>
        <position position="65"/>
    </location>
    <ligand>
        <name>L-aspartate</name>
        <dbReference type="ChEBI" id="CHEBI:29991"/>
    </ligand>
</feature>
<feature type="binding site" evidence="2">
    <location>
        <position position="160"/>
    </location>
    <ligand>
        <name>L-aspartate</name>
        <dbReference type="ChEBI" id="CHEBI:29991"/>
    </ligand>
</feature>
<feature type="binding site" evidence="2">
    <location>
        <position position="213"/>
    </location>
    <ligand>
        <name>L-aspartate</name>
        <dbReference type="ChEBI" id="CHEBI:29991"/>
    </ligand>
</feature>
<feature type="binding site" evidence="2">
    <location>
        <position position="405"/>
    </location>
    <ligand>
        <name>L-aspartate</name>
        <dbReference type="ChEBI" id="CHEBI:29991"/>
    </ligand>
</feature>
<feature type="modified residue" description="N6-(pyridoxal phosphate)lysine" evidence="2">
    <location>
        <position position="277"/>
    </location>
</feature>
<comment type="function">
    <text evidence="5 6 7 8">Amino acid aminotransferase important for the metabolism of amino acids and Krebs-cycle related organic acids. No activity with D-Asp or D-Ala as amino donors. In plants, it is involved in nitrogen metabolism and in aspects of carbon and energy metabolism.</text>
</comment>
<comment type="catalytic activity">
    <reaction evidence="5 7">
        <text>L-aspartate + 2-oxoglutarate = oxaloacetate + L-glutamate</text>
        <dbReference type="Rhea" id="RHEA:21824"/>
        <dbReference type="ChEBI" id="CHEBI:16452"/>
        <dbReference type="ChEBI" id="CHEBI:16810"/>
        <dbReference type="ChEBI" id="CHEBI:29985"/>
        <dbReference type="ChEBI" id="CHEBI:29991"/>
        <dbReference type="EC" id="2.6.1.1"/>
    </reaction>
</comment>
<comment type="cofactor">
    <cofactor>
        <name>pyridoxal 5'-phosphate</name>
        <dbReference type="ChEBI" id="CHEBI:597326"/>
    </cofactor>
</comment>
<comment type="biophysicochemical properties">
    <kinetics>
        <KM evidence="5">1 mM for L-aspartate</KM>
        <KM evidence="7">3 mM for L-aspartate</KM>
        <KM evidence="7">0.26 mM for 2-oxoglutarate</KM>
        <KM evidence="7">8.15 mM for L-glutamate</KM>
        <KM evidence="7">0.038 mM for oxaloacetate</KM>
        <text evidence="7">kcat is 205 sec(-1) for the forward reaction. kcat is 319 sec(-1) for the reverse reaction.</text>
    </kinetics>
</comment>
<comment type="subunit">
    <text evidence="1">Homodimer.</text>
</comment>
<comment type="subcellular location">
    <subcellularLocation>
        <location evidence="4">Mitochondrion matrix</location>
    </subcellularLocation>
</comment>
<comment type="miscellaneous">
    <text>In eukaryotes there are cytoplasmic, mitochondrial and chloroplastic isozymes.</text>
</comment>
<comment type="similarity">
    <text evidence="9">Belongs to the class-I pyridoxal-phosphate-dependent aminotransferase family.</text>
</comment>
<proteinExistence type="evidence at protein level"/>
<reference key="1">
    <citation type="journal article" date="1995" name="Plant J.">
        <title>The aspartate aminotransferase gene family of Arabidopsis encodes isoenzymes localized to three distinct subcellular compartments.</title>
        <authorList>
            <person name="Schultz C.J."/>
            <person name="Coruzzi G.M."/>
        </authorList>
    </citation>
    <scope>NUCLEOTIDE SEQUENCE [MRNA]</scope>
    <scope>FUNCTION</scope>
    <source>
        <strain>cv. Columbia</strain>
        <tissue>Leaf</tissue>
    </source>
</reference>
<reference key="2">
    <citation type="journal article" date="1999" name="Nature">
        <title>Sequence and analysis of chromosome 2 of the plant Arabidopsis thaliana.</title>
        <authorList>
            <person name="Lin X."/>
            <person name="Kaul S."/>
            <person name="Rounsley S.D."/>
            <person name="Shea T.P."/>
            <person name="Benito M.-I."/>
            <person name="Town C.D."/>
            <person name="Fujii C.Y."/>
            <person name="Mason T.M."/>
            <person name="Bowman C.L."/>
            <person name="Barnstead M.E."/>
            <person name="Feldblyum T.V."/>
            <person name="Buell C.R."/>
            <person name="Ketchum K.A."/>
            <person name="Lee J.J."/>
            <person name="Ronning C.M."/>
            <person name="Koo H.L."/>
            <person name="Moffat K.S."/>
            <person name="Cronin L.A."/>
            <person name="Shen M."/>
            <person name="Pai G."/>
            <person name="Van Aken S."/>
            <person name="Umayam L."/>
            <person name="Tallon L.J."/>
            <person name="Gill J.E."/>
            <person name="Adams M.D."/>
            <person name="Carrera A.J."/>
            <person name="Creasy T.H."/>
            <person name="Goodman H.M."/>
            <person name="Somerville C.R."/>
            <person name="Copenhaver G.P."/>
            <person name="Preuss D."/>
            <person name="Nierman W.C."/>
            <person name="White O."/>
            <person name="Eisen J.A."/>
            <person name="Salzberg S.L."/>
            <person name="Fraser C.M."/>
            <person name="Venter J.C."/>
        </authorList>
    </citation>
    <scope>NUCLEOTIDE SEQUENCE [LARGE SCALE GENOMIC DNA]</scope>
    <source>
        <strain>cv. Columbia</strain>
    </source>
</reference>
<reference key="3">
    <citation type="journal article" date="2017" name="Plant J.">
        <title>Araport11: a complete reannotation of the Arabidopsis thaliana reference genome.</title>
        <authorList>
            <person name="Cheng C.Y."/>
            <person name="Krishnakumar V."/>
            <person name="Chan A.P."/>
            <person name="Thibaud-Nissen F."/>
            <person name="Schobel S."/>
            <person name="Town C.D."/>
        </authorList>
    </citation>
    <scope>GENOME REANNOTATION</scope>
    <source>
        <strain>cv. Columbia</strain>
    </source>
</reference>
<reference key="4">
    <citation type="journal article" date="2003" name="Science">
        <title>Empirical analysis of transcriptional activity in the Arabidopsis genome.</title>
        <authorList>
            <person name="Yamada K."/>
            <person name="Lim J."/>
            <person name="Dale J.M."/>
            <person name="Chen H."/>
            <person name="Shinn P."/>
            <person name="Palm C.J."/>
            <person name="Southwick A.M."/>
            <person name="Wu H.C."/>
            <person name="Kim C.J."/>
            <person name="Nguyen M."/>
            <person name="Pham P.K."/>
            <person name="Cheuk R.F."/>
            <person name="Karlin-Newmann G."/>
            <person name="Liu S.X."/>
            <person name="Lam B."/>
            <person name="Sakano H."/>
            <person name="Wu T."/>
            <person name="Yu G."/>
            <person name="Miranda M."/>
            <person name="Quach H.L."/>
            <person name="Tripp M."/>
            <person name="Chang C.H."/>
            <person name="Lee J.M."/>
            <person name="Toriumi M.J."/>
            <person name="Chan M.M."/>
            <person name="Tang C.C."/>
            <person name="Onodera C.S."/>
            <person name="Deng J.M."/>
            <person name="Akiyama K."/>
            <person name="Ansari Y."/>
            <person name="Arakawa T."/>
            <person name="Banh J."/>
            <person name="Banno F."/>
            <person name="Bowser L."/>
            <person name="Brooks S.Y."/>
            <person name="Carninci P."/>
            <person name="Chao Q."/>
            <person name="Choy N."/>
            <person name="Enju A."/>
            <person name="Goldsmith A.D."/>
            <person name="Gurjal M."/>
            <person name="Hansen N.F."/>
            <person name="Hayashizaki Y."/>
            <person name="Johnson-Hopson C."/>
            <person name="Hsuan V.W."/>
            <person name="Iida K."/>
            <person name="Karnes M."/>
            <person name="Khan S."/>
            <person name="Koesema E."/>
            <person name="Ishida J."/>
            <person name="Jiang P.X."/>
            <person name="Jones T."/>
            <person name="Kawai J."/>
            <person name="Kamiya A."/>
            <person name="Meyers C."/>
            <person name="Nakajima M."/>
            <person name="Narusaka M."/>
            <person name="Seki M."/>
            <person name="Sakurai T."/>
            <person name="Satou M."/>
            <person name="Tamse R."/>
            <person name="Vaysberg M."/>
            <person name="Wallender E.K."/>
            <person name="Wong C."/>
            <person name="Yamamura Y."/>
            <person name="Yuan S."/>
            <person name="Shinozaki K."/>
            <person name="Davis R.W."/>
            <person name="Theologis A."/>
            <person name="Ecker J.R."/>
        </authorList>
    </citation>
    <scope>NUCLEOTIDE SEQUENCE [LARGE SCALE MRNA]</scope>
    <source>
        <strain>cv. Columbia</strain>
    </source>
</reference>
<reference key="5">
    <citation type="journal article" date="1998" name="Genetics">
        <title>Arabidopsis mutants define an in vivo role for isoenzymes of aspartate aminotransferase in plant nitrogen assimilation.</title>
        <authorList>
            <person name="Schultz C.J."/>
            <person name="Hsu M."/>
            <person name="Miesak B."/>
            <person name="Coruzzi G.M."/>
        </authorList>
    </citation>
    <scope>FUNCTION</scope>
</reference>
<reference key="6">
    <citation type="journal article" date="1998" name="Protein Expr. Purif.">
        <title>Recombinant expression, purification, and characterization of three isoenzymes of aspartate aminotransferase from Arabidopsis thaliana.</title>
        <authorList>
            <person name="Wilkie S.E."/>
            <person name="Warren M.J."/>
        </authorList>
    </citation>
    <scope>FUNCTION</scope>
    <scope>CATALYTIC ACTIVITY</scope>
    <scope>BIOPHYSICOCHEMICAL PROPERTIES</scope>
</reference>
<reference key="7">
    <citation type="journal article" date="2004" name="Plant Cell">
        <title>Experimental analysis of the Arabidopsis mitochondrial proteome highlights signaling and regulatory components, provides assessment of targeting prediction programs, and indicates plant-specific mitochondrial proteins.</title>
        <authorList>
            <person name="Heazlewood J.L."/>
            <person name="Tonti-Filippini J.S."/>
            <person name="Gout A.M."/>
            <person name="Day D.A."/>
            <person name="Whelan J."/>
            <person name="Millar A.H."/>
        </authorList>
    </citation>
    <scope>IDENTIFICATION BY MASS SPECTROMETRY</scope>
    <scope>SUBCELLULAR LOCATION [LARGE SCALE ANALYSIS]</scope>
    <source>
        <strain>cv. Landsberg erecta</strain>
    </source>
</reference>
<reference key="8">
    <citation type="journal article" date="2008" name="FEBS J.">
        <title>Cloning and functional characterization of Arabidopsis thaliana D-amino acid aminotransferase--D-aspartate behavior during germination.</title>
        <authorList>
            <person name="Funakoshi M."/>
            <person name="Sekine M."/>
            <person name="Katane M."/>
            <person name="Furuchi T."/>
            <person name="Yohda M."/>
            <person name="Yoshikawa T."/>
            <person name="Homma H."/>
        </authorList>
    </citation>
    <scope>FUNCTION</scope>
    <scope>CATALYTIC ACTIVITY</scope>
    <scope>BIOPHYSICOCHEMICAL PROPERTIES</scope>
</reference>
<protein>
    <recommendedName>
        <fullName>Aspartate aminotransferase, mitochondrial</fullName>
        <ecNumber>2.6.1.1</ecNumber>
    </recommendedName>
    <alternativeName>
        <fullName>Transaminase A</fullName>
    </alternativeName>
</protein>
<dbReference type="EC" id="2.6.1.1"/>
<dbReference type="EMBL" id="U15026">
    <property type="protein sequence ID" value="AAA79369.1"/>
    <property type="molecule type" value="mRNA"/>
</dbReference>
<dbReference type="EMBL" id="AC004669">
    <property type="protein sequence ID" value="AAC20731.1"/>
    <property type="molecule type" value="Genomic_DNA"/>
</dbReference>
<dbReference type="EMBL" id="CP002685">
    <property type="protein sequence ID" value="AEC08468.1"/>
    <property type="molecule type" value="Genomic_DNA"/>
</dbReference>
<dbReference type="EMBL" id="CP002685">
    <property type="protein sequence ID" value="AEC08469.1"/>
    <property type="molecule type" value="Genomic_DNA"/>
</dbReference>
<dbReference type="EMBL" id="AY059912">
    <property type="protein sequence ID" value="AAL24394.1"/>
    <property type="molecule type" value="mRNA"/>
</dbReference>
<dbReference type="EMBL" id="AY128806">
    <property type="protein sequence ID" value="AAM91206.1"/>
    <property type="molecule type" value="mRNA"/>
</dbReference>
<dbReference type="PIR" id="H84714">
    <property type="entry name" value="H84714"/>
</dbReference>
<dbReference type="RefSeq" id="NP_001118421.1">
    <property type="nucleotide sequence ID" value="NM_001124949.1"/>
</dbReference>
<dbReference type="RefSeq" id="NP_180654.1">
    <property type="nucleotide sequence ID" value="NM_128651.5"/>
</dbReference>
<dbReference type="SMR" id="P46643"/>
<dbReference type="BioGRID" id="2997">
    <property type="interactions" value="1"/>
</dbReference>
<dbReference type="FunCoup" id="P46643">
    <property type="interactions" value="3064"/>
</dbReference>
<dbReference type="STRING" id="3702.P46643"/>
<dbReference type="GlyGen" id="P46643">
    <property type="glycosylation" value="1 site"/>
</dbReference>
<dbReference type="MetOSite" id="P46643"/>
<dbReference type="PaxDb" id="3702-AT2G30970.1"/>
<dbReference type="ProteomicsDB" id="244373"/>
<dbReference type="EnsemblPlants" id="AT2G30970.1">
    <property type="protein sequence ID" value="AT2G30970.1"/>
    <property type="gene ID" value="AT2G30970"/>
</dbReference>
<dbReference type="EnsemblPlants" id="AT2G30970.2">
    <property type="protein sequence ID" value="AT2G30970.2"/>
    <property type="gene ID" value="AT2G30970"/>
</dbReference>
<dbReference type="GeneID" id="817648"/>
<dbReference type="Gramene" id="AT2G30970.1">
    <property type="protein sequence ID" value="AT2G30970.1"/>
    <property type="gene ID" value="AT2G30970"/>
</dbReference>
<dbReference type="Gramene" id="AT2G30970.2">
    <property type="protein sequence ID" value="AT2G30970.2"/>
    <property type="gene ID" value="AT2G30970"/>
</dbReference>
<dbReference type="KEGG" id="ath:AT2G30970"/>
<dbReference type="Araport" id="AT2G30970"/>
<dbReference type="TAIR" id="AT2G30970">
    <property type="gene designation" value="ASP1"/>
</dbReference>
<dbReference type="eggNOG" id="KOG1411">
    <property type="taxonomic scope" value="Eukaryota"/>
</dbReference>
<dbReference type="HOGENOM" id="CLU_032440_1_2_1"/>
<dbReference type="InParanoid" id="P46643"/>
<dbReference type="OMA" id="GTWTHIT"/>
<dbReference type="PhylomeDB" id="P46643"/>
<dbReference type="SABIO-RK" id="P46643"/>
<dbReference type="CD-CODE" id="4299E36E">
    <property type="entry name" value="Nucleolus"/>
</dbReference>
<dbReference type="PRO" id="PR:P46643"/>
<dbReference type="Proteomes" id="UP000006548">
    <property type="component" value="Chromosome 2"/>
</dbReference>
<dbReference type="ExpressionAtlas" id="P46643">
    <property type="expression patterns" value="baseline and differential"/>
</dbReference>
<dbReference type="GO" id="GO:0005829">
    <property type="term" value="C:cytosol"/>
    <property type="evidence" value="ECO:0007005"/>
    <property type="project" value="TAIR"/>
</dbReference>
<dbReference type="GO" id="GO:0005759">
    <property type="term" value="C:mitochondrial matrix"/>
    <property type="evidence" value="ECO:0007669"/>
    <property type="project" value="UniProtKB-SubCell"/>
</dbReference>
<dbReference type="GO" id="GO:0005739">
    <property type="term" value="C:mitochondrion"/>
    <property type="evidence" value="ECO:0000314"/>
    <property type="project" value="TAIR"/>
</dbReference>
<dbReference type="GO" id="GO:0005777">
    <property type="term" value="C:peroxisome"/>
    <property type="evidence" value="ECO:0007005"/>
    <property type="project" value="TAIR"/>
</dbReference>
<dbReference type="GO" id="GO:0005507">
    <property type="term" value="F:copper ion binding"/>
    <property type="evidence" value="ECO:0007005"/>
    <property type="project" value="TAIR"/>
</dbReference>
<dbReference type="GO" id="GO:0004069">
    <property type="term" value="F:L-aspartate:2-oxoglutarate aminotransferase activity"/>
    <property type="evidence" value="ECO:0000314"/>
    <property type="project" value="TAIR"/>
</dbReference>
<dbReference type="GO" id="GO:0030170">
    <property type="term" value="F:pyridoxal phosphate binding"/>
    <property type="evidence" value="ECO:0007669"/>
    <property type="project" value="InterPro"/>
</dbReference>
<dbReference type="GO" id="GO:0006103">
    <property type="term" value="P:2-oxoglutarate metabolic process"/>
    <property type="evidence" value="ECO:0000250"/>
    <property type="project" value="UniProtKB"/>
</dbReference>
<dbReference type="GO" id="GO:0006531">
    <property type="term" value="P:aspartate metabolic process"/>
    <property type="evidence" value="ECO:0000250"/>
    <property type="project" value="UniProtKB"/>
</dbReference>
<dbReference type="GO" id="GO:0009058">
    <property type="term" value="P:biosynthetic process"/>
    <property type="evidence" value="ECO:0007669"/>
    <property type="project" value="InterPro"/>
</dbReference>
<dbReference type="GO" id="GO:0006536">
    <property type="term" value="P:glutamate metabolic process"/>
    <property type="evidence" value="ECO:0000250"/>
    <property type="project" value="UniProtKB"/>
</dbReference>
<dbReference type="CDD" id="cd00609">
    <property type="entry name" value="AAT_like"/>
    <property type="match status" value="1"/>
</dbReference>
<dbReference type="FunFam" id="3.40.640.10:FF:000015">
    <property type="entry name" value="Aspartate aminotransferase"/>
    <property type="match status" value="1"/>
</dbReference>
<dbReference type="FunFam" id="3.90.1150.10:FF:000001">
    <property type="entry name" value="Aspartate aminotransferase"/>
    <property type="match status" value="1"/>
</dbReference>
<dbReference type="Gene3D" id="3.90.1150.10">
    <property type="entry name" value="Aspartate Aminotransferase, domain 1"/>
    <property type="match status" value="1"/>
</dbReference>
<dbReference type="Gene3D" id="3.40.640.10">
    <property type="entry name" value="Type I PLP-dependent aspartate aminotransferase-like (Major domain)"/>
    <property type="match status" value="1"/>
</dbReference>
<dbReference type="InterPro" id="IPR004839">
    <property type="entry name" value="Aminotransferase_I/II_large"/>
</dbReference>
<dbReference type="InterPro" id="IPR000796">
    <property type="entry name" value="Asp_trans"/>
</dbReference>
<dbReference type="InterPro" id="IPR004838">
    <property type="entry name" value="NHTrfase_class1_PyrdxlP-BS"/>
</dbReference>
<dbReference type="InterPro" id="IPR015424">
    <property type="entry name" value="PyrdxlP-dep_Trfase"/>
</dbReference>
<dbReference type="InterPro" id="IPR015421">
    <property type="entry name" value="PyrdxlP-dep_Trfase_major"/>
</dbReference>
<dbReference type="InterPro" id="IPR015422">
    <property type="entry name" value="PyrdxlP-dep_Trfase_small"/>
</dbReference>
<dbReference type="NCBIfam" id="NF006719">
    <property type="entry name" value="PRK09257.1"/>
    <property type="match status" value="1"/>
</dbReference>
<dbReference type="PANTHER" id="PTHR11879">
    <property type="entry name" value="ASPARTATE AMINOTRANSFERASE"/>
    <property type="match status" value="1"/>
</dbReference>
<dbReference type="PANTHER" id="PTHR11879:SF54">
    <property type="entry name" value="ASPARTATE AMINOTRANSFERASE, MITOCHONDRIAL"/>
    <property type="match status" value="1"/>
</dbReference>
<dbReference type="Pfam" id="PF00155">
    <property type="entry name" value="Aminotran_1_2"/>
    <property type="match status" value="1"/>
</dbReference>
<dbReference type="PRINTS" id="PR00799">
    <property type="entry name" value="TRANSAMINASE"/>
</dbReference>
<dbReference type="SUPFAM" id="SSF53383">
    <property type="entry name" value="PLP-dependent transferases"/>
    <property type="match status" value="1"/>
</dbReference>
<dbReference type="PROSITE" id="PS00105">
    <property type="entry name" value="AA_TRANSFER_CLASS_1"/>
    <property type="match status" value="1"/>
</dbReference>
<keyword id="KW-0032">Aminotransferase</keyword>
<keyword id="KW-0496">Mitochondrion</keyword>
<keyword id="KW-0663">Pyridoxal phosphate</keyword>
<keyword id="KW-1185">Reference proteome</keyword>
<keyword id="KW-0808">Transferase</keyword>
<keyword id="KW-0809">Transit peptide</keyword>